<feature type="chain" id="PRO_0000219458" description="Protein unc-112">
    <location>
        <begin position="1"/>
        <end position="720"/>
    </location>
</feature>
<feature type="domain" description="FERM">
    <location>
        <begin position="288"/>
        <end position="614"/>
    </location>
</feature>
<feature type="domain" description="PH" evidence="1">
    <location>
        <begin position="402"/>
        <end position="507"/>
    </location>
</feature>
<feature type="region of interest" description="Disordered" evidence="2">
    <location>
        <begin position="145"/>
        <end position="170"/>
    </location>
</feature>
<feature type="region of interest" description="Disordered" evidence="2">
    <location>
        <begin position="210"/>
        <end position="236"/>
    </location>
</feature>
<feature type="mutagenesis site" description="In R367; temperature sensitive. Adults are paralyzed. Induces disorganized body wall muscle. Disrupted integrin attachment complexes in muscle, which results in degradation of muscle proteins in the cytosol, myofibrillar defects and disruption of sarcomere organization. Mitochondrial fragmentation." evidence="3 6">
    <original>T</original>
    <variation>I</variation>
    <location>
        <position position="85"/>
    </location>
</feature>
<proteinExistence type="evidence at protein level"/>
<organism>
    <name type="scientific">Caenorhabditis elegans</name>
    <dbReference type="NCBI Taxonomy" id="6239"/>
    <lineage>
        <taxon>Eukaryota</taxon>
        <taxon>Metazoa</taxon>
        <taxon>Ecdysozoa</taxon>
        <taxon>Nematoda</taxon>
        <taxon>Chromadorea</taxon>
        <taxon>Rhabditida</taxon>
        <taxon>Rhabditina</taxon>
        <taxon>Rhabditomorpha</taxon>
        <taxon>Rhabditoidea</taxon>
        <taxon>Rhabditidae</taxon>
        <taxon>Peloderinae</taxon>
        <taxon>Caenorhabditis</taxon>
    </lineage>
</organism>
<keyword id="KW-0130">Cell adhesion</keyword>
<keyword id="KW-1003">Cell membrane</keyword>
<keyword id="KW-0963">Cytoplasm</keyword>
<keyword id="KW-0472">Membrane</keyword>
<keyword id="KW-1185">Reference proteome</keyword>
<dbReference type="EMBL" id="AF217185">
    <property type="protein sequence ID" value="AAF20162.1"/>
    <property type="molecule type" value="mRNA"/>
</dbReference>
<dbReference type="EMBL" id="BX284605">
    <property type="protein sequence ID" value="CAA99790.1"/>
    <property type="molecule type" value="Genomic_DNA"/>
</dbReference>
<dbReference type="PIR" id="T20016">
    <property type="entry name" value="T20016"/>
</dbReference>
<dbReference type="RefSeq" id="NP_506628.1">
    <property type="nucleotide sequence ID" value="NM_074227.8"/>
</dbReference>
<dbReference type="SMR" id="Q18685"/>
<dbReference type="BioGRID" id="44974">
    <property type="interactions" value="6"/>
</dbReference>
<dbReference type="FunCoup" id="Q18685">
    <property type="interactions" value="1605"/>
</dbReference>
<dbReference type="IntAct" id="Q18685">
    <property type="interactions" value="2"/>
</dbReference>
<dbReference type="STRING" id="6239.C47E8.7.2"/>
<dbReference type="iPTMnet" id="Q18685"/>
<dbReference type="PaxDb" id="6239-C47E8.7.1"/>
<dbReference type="PeptideAtlas" id="Q18685"/>
<dbReference type="EnsemblMetazoa" id="C47E8.7.1">
    <property type="protein sequence ID" value="C47E8.7.1"/>
    <property type="gene ID" value="WBGene00006836"/>
</dbReference>
<dbReference type="GeneID" id="179972"/>
<dbReference type="KEGG" id="cel:CELE_C47E8.7"/>
<dbReference type="UCSC" id="C47E8.7.1">
    <property type="organism name" value="c. elegans"/>
</dbReference>
<dbReference type="AGR" id="WB:WBGene00006836"/>
<dbReference type="CTD" id="179972"/>
<dbReference type="WormBase" id="C47E8.7">
    <property type="protein sequence ID" value="CE05443"/>
    <property type="gene ID" value="WBGene00006836"/>
    <property type="gene designation" value="unc-112"/>
</dbReference>
<dbReference type="eggNOG" id="KOG3727">
    <property type="taxonomic scope" value="Eukaryota"/>
</dbReference>
<dbReference type="GeneTree" id="ENSGT00390000013444"/>
<dbReference type="HOGENOM" id="CLU_011611_0_0_1"/>
<dbReference type="InParanoid" id="Q18685"/>
<dbReference type="OMA" id="PEHGIHY"/>
<dbReference type="OrthoDB" id="10057618at2759"/>
<dbReference type="PhylomeDB" id="Q18685"/>
<dbReference type="Reactome" id="R-CEL-114608">
    <property type="pathway name" value="Platelet degranulation"/>
</dbReference>
<dbReference type="Reactome" id="R-CEL-446353">
    <property type="pathway name" value="Cell-extracellular matrix interactions"/>
</dbReference>
<dbReference type="Reactome" id="R-CEL-9013149">
    <property type="pathway name" value="RAC1 GTPase cycle"/>
</dbReference>
<dbReference type="Reactome" id="R-CEL-9013423">
    <property type="pathway name" value="RAC3 GTPase cycle"/>
</dbReference>
<dbReference type="PRO" id="PR:Q18685"/>
<dbReference type="Proteomes" id="UP000001940">
    <property type="component" value="Chromosome V"/>
</dbReference>
<dbReference type="Bgee" id="WBGene00006836">
    <property type="expression patterns" value="Expressed in pharyngeal muscle cell (C elegans) and 4 other cell types or tissues"/>
</dbReference>
<dbReference type="GO" id="GO:0030055">
    <property type="term" value="C:cell-substrate junction"/>
    <property type="evidence" value="ECO:0000314"/>
    <property type="project" value="WormBase"/>
</dbReference>
<dbReference type="GO" id="GO:0005737">
    <property type="term" value="C:cytoplasm"/>
    <property type="evidence" value="ECO:0000314"/>
    <property type="project" value="UniProtKB"/>
</dbReference>
<dbReference type="GO" id="GO:0031430">
    <property type="term" value="C:M band"/>
    <property type="evidence" value="ECO:0000314"/>
    <property type="project" value="UniProtKB"/>
</dbReference>
<dbReference type="GO" id="GO:0005886">
    <property type="term" value="C:plasma membrane"/>
    <property type="evidence" value="ECO:0000314"/>
    <property type="project" value="WormBase"/>
</dbReference>
<dbReference type="GO" id="GO:0055120">
    <property type="term" value="C:striated muscle dense body"/>
    <property type="evidence" value="ECO:0000314"/>
    <property type="project" value="UniProtKB"/>
</dbReference>
<dbReference type="GO" id="GO:0050839">
    <property type="term" value="F:cell adhesion molecule binding"/>
    <property type="evidence" value="ECO:0000314"/>
    <property type="project" value="UniProtKB"/>
</dbReference>
<dbReference type="GO" id="GO:0005178">
    <property type="term" value="F:integrin binding"/>
    <property type="evidence" value="ECO:0000353"/>
    <property type="project" value="UniProtKB"/>
</dbReference>
<dbReference type="GO" id="GO:0030674">
    <property type="term" value="F:protein-macromolecule adaptor activity"/>
    <property type="evidence" value="ECO:0000353"/>
    <property type="project" value="WormBase"/>
</dbReference>
<dbReference type="GO" id="GO:0007160">
    <property type="term" value="P:cell-matrix adhesion"/>
    <property type="evidence" value="ECO:0000314"/>
    <property type="project" value="UniProtKB"/>
</dbReference>
<dbReference type="GO" id="GO:0072594">
    <property type="term" value="P:establishment of protein localization to organelle"/>
    <property type="evidence" value="ECO:0000315"/>
    <property type="project" value="UniProtKB"/>
</dbReference>
<dbReference type="GO" id="GO:0007229">
    <property type="term" value="P:integrin-mediated signaling pathway"/>
    <property type="evidence" value="ECO:0007669"/>
    <property type="project" value="InterPro"/>
</dbReference>
<dbReference type="GO" id="GO:0040011">
    <property type="term" value="P:locomotion"/>
    <property type="evidence" value="ECO:0000315"/>
    <property type="project" value="WormBase"/>
</dbReference>
<dbReference type="GO" id="GO:0007005">
    <property type="term" value="P:mitochondrion organization"/>
    <property type="evidence" value="ECO:0000315"/>
    <property type="project" value="UniProtKB"/>
</dbReference>
<dbReference type="GO" id="GO:0046716">
    <property type="term" value="P:muscle cell cellular homeostasis"/>
    <property type="evidence" value="ECO:0000315"/>
    <property type="project" value="UniProtKB"/>
</dbReference>
<dbReference type="GO" id="GO:0007517">
    <property type="term" value="P:muscle organ development"/>
    <property type="evidence" value="ECO:0000314"/>
    <property type="project" value="UniProtKB"/>
</dbReference>
<dbReference type="GO" id="GO:0040017">
    <property type="term" value="P:positive regulation of locomotion"/>
    <property type="evidence" value="ECO:0000315"/>
    <property type="project" value="UniProtKB"/>
</dbReference>
<dbReference type="GO" id="GO:1904901">
    <property type="term" value="P:positive regulation of myosin II filament organization"/>
    <property type="evidence" value="ECO:0000315"/>
    <property type="project" value="UniProtKB"/>
</dbReference>
<dbReference type="GO" id="GO:0060298">
    <property type="term" value="P:positive regulation of sarcomere organization"/>
    <property type="evidence" value="ECO:0000315"/>
    <property type="project" value="UniProtKB"/>
</dbReference>
<dbReference type="GO" id="GO:1901074">
    <property type="term" value="P:regulation of engulfment of apoptotic cell"/>
    <property type="evidence" value="ECO:0000315"/>
    <property type="project" value="WormBase"/>
</dbReference>
<dbReference type="CDD" id="cd14473">
    <property type="entry name" value="FERM_B-lobe"/>
    <property type="match status" value="2"/>
</dbReference>
<dbReference type="CDD" id="cd13205">
    <property type="entry name" value="FERM_C_fermitin"/>
    <property type="match status" value="1"/>
</dbReference>
<dbReference type="CDD" id="cd17095">
    <property type="entry name" value="FERM_F0_kindlins"/>
    <property type="match status" value="1"/>
</dbReference>
<dbReference type="CDD" id="cd17096">
    <property type="entry name" value="FERM_F1_kindlins"/>
    <property type="match status" value="1"/>
</dbReference>
<dbReference type="CDD" id="cd01237">
    <property type="entry name" value="PH_fermitin"/>
    <property type="match status" value="1"/>
</dbReference>
<dbReference type="Gene3D" id="3.10.20.90">
    <property type="entry name" value="Phosphatidylinositol 3-kinase Catalytic Subunit, Chain A, domain 1"/>
    <property type="match status" value="2"/>
</dbReference>
<dbReference type="Gene3D" id="2.30.29.30">
    <property type="entry name" value="Pleckstrin-homology domain (PH domain)/Phosphotyrosine-binding domain (PTB)"/>
    <property type="match status" value="2"/>
</dbReference>
<dbReference type="InterPro" id="IPR019749">
    <property type="entry name" value="Band_41_domain"/>
</dbReference>
<dbReference type="InterPro" id="IPR035963">
    <property type="entry name" value="FERM_2"/>
</dbReference>
<dbReference type="InterPro" id="IPR019748">
    <property type="entry name" value="FERM_central"/>
</dbReference>
<dbReference type="InterPro" id="IPR019747">
    <property type="entry name" value="FERM_CS"/>
</dbReference>
<dbReference type="InterPro" id="IPR037843">
    <property type="entry name" value="Kindlin/fermitin"/>
</dbReference>
<dbReference type="InterPro" id="IPR040790">
    <property type="entry name" value="Kindlin_2_N"/>
</dbReference>
<dbReference type="InterPro" id="IPR011993">
    <property type="entry name" value="PH-like_dom_sf"/>
</dbReference>
<dbReference type="InterPro" id="IPR001849">
    <property type="entry name" value="PH_domain"/>
</dbReference>
<dbReference type="InterPro" id="IPR037837">
    <property type="entry name" value="PH_Kindlin/fermitin"/>
</dbReference>
<dbReference type="PANTHER" id="PTHR16160">
    <property type="entry name" value="FERMITIN 2-RELATED"/>
    <property type="match status" value="1"/>
</dbReference>
<dbReference type="PANTHER" id="PTHR16160:SF13">
    <property type="entry name" value="FERMITIN 2-RELATED"/>
    <property type="match status" value="1"/>
</dbReference>
<dbReference type="Pfam" id="PF00373">
    <property type="entry name" value="FERM_M"/>
    <property type="match status" value="1"/>
</dbReference>
<dbReference type="Pfam" id="PF18124">
    <property type="entry name" value="Kindlin_2_N"/>
    <property type="match status" value="1"/>
</dbReference>
<dbReference type="Pfam" id="PF00169">
    <property type="entry name" value="PH"/>
    <property type="match status" value="1"/>
</dbReference>
<dbReference type="SMART" id="SM00295">
    <property type="entry name" value="B41"/>
    <property type="match status" value="1"/>
</dbReference>
<dbReference type="SMART" id="SM00233">
    <property type="entry name" value="PH"/>
    <property type="match status" value="1"/>
</dbReference>
<dbReference type="SUPFAM" id="SSF50729">
    <property type="entry name" value="PH domain-like"/>
    <property type="match status" value="2"/>
</dbReference>
<dbReference type="SUPFAM" id="SSF47031">
    <property type="entry name" value="Second domain of FERM"/>
    <property type="match status" value="1"/>
</dbReference>
<dbReference type="PROSITE" id="PS00660">
    <property type="entry name" value="FERM_1"/>
    <property type="match status" value="1"/>
</dbReference>
<dbReference type="PROSITE" id="PS50003">
    <property type="entry name" value="PH_DOMAIN"/>
    <property type="match status" value="1"/>
</dbReference>
<comment type="function">
    <text evidence="3 6">Component of an integrin containing attachment complex, which is required for muscle development and maintenance (PubMed:22253611). Probable regulator of cell-extracellular matrix adhesion (PubMed:10893272). Required during initial muscle assembly to form dense bodies and M-lines (PubMed:10893272).</text>
</comment>
<comment type="subunit">
    <text evidence="4 5 9">Interacts with pat-4/ILK (PubMed:12015115, PubMed:12781130). Probably forms a complex with pat-4 and pat-6 (PubMed:12781130). Component of an integrin containing attachment complex, composed of at least pat-2, pat-3, pat-4, pat-6, unc-52, unc-97 and unc-112 (PubMed:22253611).</text>
</comment>
<comment type="interaction">
    <interactant intactId="EBI-1564809">
        <id>Q18685</id>
    </interactant>
    <interactant intactId="EBI-1564527">
        <id>Q9TZC4</id>
        <label>pat-4</label>
    </interactant>
    <organismsDiffer>false</organismsDiffer>
    <experiments>5</experiments>
</comment>
<comment type="subcellular location">
    <subcellularLocation>
        <location evidence="3">Cell membrane</location>
        <topology evidence="3">Peripheral membrane protein</topology>
    </subcellularLocation>
    <subcellularLocation>
        <location evidence="7">Cytoplasm</location>
        <location evidence="7">Myofibril</location>
        <location evidence="7">Sarcomere</location>
        <location evidence="7">M line</location>
    </subcellularLocation>
    <text evidence="3 7">Colocalizes with pat-3/beta-integrin in body wall muscles. Requires unc-52/perlecan and pat-3 to be localized to the muscle cell membrane (PubMed:10893272). Colocalizes with cpna-1 in M line and dense bodies (PubMed:23283987).</text>
</comment>
<comment type="tissue specificity">
    <text evidence="3 4 5 7">Mainly expressed in muscle cells in both embryos and adults.</text>
</comment>
<comment type="domain">
    <text>The FERM domain is not correctly detected by PROSITE or Pfam techniques because it contains the insertion of a PH domain.</text>
</comment>
<comment type="disruption phenotype">
    <text evidence="6">RNAi-mediated knockdown results in impaired mobility, mitochondrial fragmentation and disrupted integrin attachment complexes in muscle. This leads to degradation of muscle proteins in the cytosol, myofibrillar defects and disruption of sarcomere organization.</text>
</comment>
<comment type="similarity">
    <text evidence="8">Belongs to the kindlin family.</text>
</comment>
<accession>Q18685</accession>
<sequence length="720" mass="82355">MAHLVEGTSIIDGKWQLPILVTDLNIQRSISVLGNLNVGGLMLELVSECDVERDWSDHALWWPEKRRWLQHTRSTLDQNGITAETQLEFTPMHKEARIQLPDMQMIDARVDFSVNSFKATKKLCRDLGIRYSEELSLKRYIPPEDLRRGTSDADNMNGPLSMRPGEESVGPMTLRKAAPIFASQSNLDMRRRGQSPALSQSGHIFNAHEMGTLPRHGTLPRGVSPSPGAYNDTMRRTPIMPSISFSEGLENEQFDDALIHSPRLAPSRDTPVFRPQNYVEKAAINRGWLDSSRSLMEQGIFEGDIILLRFKFMNFFDLNPKYDPVRINQLYEQAKWSILLDEFDHTEEEATLFAALQLQATLQRDSPEPEENNKDDVDILLDELEQNLDAAALNRRSDLTQVPELADYLKYMKPKKLAAFKGFKRAFFSFRDLYLSYHQSSSDVNSAPLGHFSLKGCEVSQDVSVGQQKYHIKLLLPTAEGMIDFILKCDSEHQYARWMAACRLASRGKSMADSSYQQEVESIKNLLKMQSGNGNENGNSNTASRKAAAVKLPNDFNVDEYISSKYVRRARSKQQIQQRVSDAHGNVRQLTATEAKLQYIRAWQALPEHGIHYFIVRFRNARKAELVAVAVNRLAKLNMDNGESLKTWRFANMKKWHVNWEIRHLKIQFEDEDIEFKPLSADCKVVHEFIGGYIFLSMRSKEHSQNLDEELFHKLTGGWA</sequence>
<evidence type="ECO:0000255" key="1">
    <source>
        <dbReference type="PROSITE-ProRule" id="PRU00145"/>
    </source>
</evidence>
<evidence type="ECO:0000256" key="2">
    <source>
        <dbReference type="SAM" id="MobiDB-lite"/>
    </source>
</evidence>
<evidence type="ECO:0000269" key="3">
    <source>
    </source>
</evidence>
<evidence type="ECO:0000269" key="4">
    <source>
    </source>
</evidence>
<evidence type="ECO:0000269" key="5">
    <source>
    </source>
</evidence>
<evidence type="ECO:0000269" key="6">
    <source>
    </source>
</evidence>
<evidence type="ECO:0000269" key="7">
    <source>
    </source>
</evidence>
<evidence type="ECO:0000305" key="8"/>
<evidence type="ECO:0000305" key="9">
    <source>
    </source>
</evidence>
<evidence type="ECO:0000312" key="10">
    <source>
        <dbReference type="WormBase" id="C47E8.7"/>
    </source>
</evidence>
<gene>
    <name evidence="10" type="primary">unc-112</name>
    <name evidence="10" type="ORF">C47E8.7</name>
</gene>
<name>UN112_CAEEL</name>
<protein>
    <recommendedName>
        <fullName>Protein unc-112</fullName>
    </recommendedName>
    <alternativeName>
        <fullName>Mitogen-inducible mig-2 protein-like</fullName>
    </alternativeName>
    <alternativeName>
        <fullName>Uncoordinated protein 112</fullName>
    </alternativeName>
</protein>
<reference key="1">
    <citation type="journal article" date="2000" name="J. Cell Biol.">
        <title>The UNC-112 gene in Caenorhabditis elegans encodes a novel component of cell-matrix adhesion structures required for integrin localization in the muscle cell membrane.</title>
        <authorList>
            <person name="Rogalski T.M."/>
            <person name="Mullen G.P."/>
            <person name="Gilbert M.M."/>
            <person name="Williams B.D."/>
            <person name="Moerman D.G."/>
        </authorList>
    </citation>
    <scope>NUCLEOTIDE SEQUENCE [MRNA]</scope>
    <scope>FUNCTION</scope>
    <scope>SUBCELLULAR LOCATION</scope>
    <scope>TISSUE SPECIFICITY</scope>
    <scope>MUTAGENESIS OF THR-85</scope>
</reference>
<reference key="2">
    <citation type="journal article" date="1998" name="Science">
        <title>Genome sequence of the nematode C. elegans: a platform for investigating biology.</title>
        <authorList>
            <consortium name="The C. elegans sequencing consortium"/>
        </authorList>
    </citation>
    <scope>NUCLEOTIDE SEQUENCE [LARGE SCALE GENOMIC DNA]</scope>
    <source>
        <strain>Bristol N2</strain>
    </source>
</reference>
<reference key="3">
    <citation type="journal article" date="2002" name="Curr. Biol.">
        <title>C. elegans PAT-4/ILK functions as an adaptor protein within integrin adhesion complexes.</title>
        <authorList>
            <person name="Mackinnon A.C."/>
            <person name="Qadota H."/>
            <person name="Norman K.R."/>
            <person name="Moerman D.G."/>
            <person name="Williams B.D."/>
        </authorList>
    </citation>
    <scope>INTERACTION WITH PAT-4</scope>
    <scope>TISSUE SPECIFICITY</scope>
</reference>
<reference key="4">
    <citation type="journal article" date="2003" name="Curr. Biol.">
        <title>C. elegans PAT-6/actopaxin plays a critical role in the assembly of integrin adhesion complexes in vivo.</title>
        <authorList>
            <person name="Lin X."/>
            <person name="Qadota H."/>
            <person name="Moerman D.G."/>
            <person name="Williams B.D."/>
        </authorList>
    </citation>
    <scope>SUBUNIT OF A COMPLEX WITH PAT-4 AND PAT-6</scope>
    <scope>TISSUE SPECIFICITY</scope>
</reference>
<reference key="5">
    <citation type="journal article" date="2012" name="PLoS Genet.">
        <title>Calpains mediate integrin attachment complex maintenance of adult muscle in Caenorhabditis elegans.</title>
        <authorList>
            <person name="Etheridge T."/>
            <person name="Oczypok E.A."/>
            <person name="Lehmann S."/>
            <person name="Fields B.D."/>
            <person name="Shephard F."/>
            <person name="Jacobson L.A."/>
            <person name="Szewczyk N.J."/>
        </authorList>
    </citation>
    <scope>FUNCTION</scope>
    <scope>COMPONENT OF AN INTEGRIN CONTAINING ATTACHMENT COMPLEX</scope>
    <scope>DISRUPTION PHENOTYPE</scope>
    <scope>MUTAGENESIS OF THR-85</scope>
</reference>
<reference key="6">
    <citation type="journal article" date="2013" name="Mol. Biol. Cell">
        <title>CPNA-1, a copine domain protein, is located at integrin adhesion sites and is required for myofilament stability in Caenorhabditis elegans.</title>
        <authorList>
            <person name="Warner A."/>
            <person name="Xiong G."/>
            <person name="Qadota H."/>
            <person name="Rogalski T."/>
            <person name="Vogl A.W."/>
            <person name="Moerman D.G."/>
            <person name="Benian G.M."/>
        </authorList>
    </citation>
    <scope>SUBCELLULAR LOCATION</scope>
    <scope>TISSUE SPECIFICITY</scope>
</reference>